<reference key="1">
    <citation type="journal article" date="2019" name="Toxins">
        <title>Missiles of mass disruption: composition and glandular origin of venom used as a projectile defensive weapon by the assassin bug Platymeris rhadamanthus.</title>
        <authorList>
            <person name="Walker A.A."/>
            <person name="Robinson S.D."/>
            <person name="Undheim E.A.B."/>
            <person name="Jin J."/>
            <person name="Han X."/>
            <person name="Fry B.G."/>
            <person name="Vetter I."/>
            <person name="King G.F."/>
        </authorList>
    </citation>
    <scope>NUCLEOTIDE SEQUENCE [MRNA]</scope>
    <scope>MASS SPECTROMETRY</scope>
    <scope>SUBCELLULAR LOCATION</scope>
    <source>
        <tissue>Venom</tissue>
        <tissue>Venom gland</tissue>
    </source>
</reference>
<feature type="signal peptide" evidence="3">
    <location>
        <begin position="1"/>
        <end position="19"/>
    </location>
</feature>
<feature type="peptide" id="PRO_5025637189" description="U-reduvitoxin-Pr5a" evidence="4">
    <location>
        <begin position="20"/>
        <end position="48"/>
    </location>
</feature>
<feature type="disulfide bond" evidence="1">
    <location>
        <begin position="20"/>
        <end position="34"/>
    </location>
</feature>
<feature type="disulfide bond" evidence="1">
    <location>
        <begin position="27"/>
        <end position="39"/>
    </location>
</feature>
<feature type="disulfide bond" evidence="1">
    <location>
        <begin position="33"/>
        <end position="44"/>
    </location>
</feature>
<name>PLK5A_PLARH</name>
<dbReference type="EMBL" id="MN208349">
    <property type="protein sequence ID" value="QHB21538.1"/>
    <property type="molecule type" value="mRNA"/>
</dbReference>
<dbReference type="SMR" id="A0A6B9L6D3"/>
<dbReference type="GO" id="GO:0005576">
    <property type="term" value="C:extracellular region"/>
    <property type="evidence" value="ECO:0007669"/>
    <property type="project" value="UniProtKB-SubCell"/>
</dbReference>
<dbReference type="GO" id="GO:0005246">
    <property type="term" value="F:calcium channel regulator activity"/>
    <property type="evidence" value="ECO:0007669"/>
    <property type="project" value="UniProtKB-KW"/>
</dbReference>
<dbReference type="GO" id="GO:0090729">
    <property type="term" value="F:toxin activity"/>
    <property type="evidence" value="ECO:0007669"/>
    <property type="project" value="UniProtKB-KW"/>
</dbReference>
<keyword id="KW-0108">Calcium channel impairing toxin</keyword>
<keyword id="KW-1015">Disulfide bond</keyword>
<keyword id="KW-0872">Ion channel impairing toxin</keyword>
<keyword id="KW-0960">Knottin</keyword>
<keyword id="KW-0528">Neurotoxin</keyword>
<keyword id="KW-0964">Secreted</keyword>
<keyword id="KW-0732">Signal</keyword>
<keyword id="KW-0800">Toxin</keyword>
<keyword id="KW-1218">Voltage-gated calcium channel impairing toxin</keyword>
<evidence type="ECO:0000250" key="1">
    <source>
        <dbReference type="UniProtKB" id="P58606"/>
    </source>
</evidence>
<evidence type="ECO:0000250" key="2">
    <source>
        <dbReference type="UniProtKB" id="P58608"/>
    </source>
</evidence>
<evidence type="ECO:0000255" key="3"/>
<evidence type="ECO:0000269" key="4">
    <source>
    </source>
</evidence>
<evidence type="ECO:0000303" key="5">
    <source>
    </source>
</evidence>
<evidence type="ECO:0000305" key="6"/>
<evidence type="ECO:0000305" key="7">
    <source>
    </source>
</evidence>
<accession>A0A6B9L6D3</accession>
<comment type="function">
    <text evidence="2">Binds reversibly and blocks P/Q-type voltage-gated calcium channels (Cav).</text>
</comment>
<comment type="subcellular location">
    <subcellularLocation>
        <location evidence="4">Secreted</location>
    </subcellularLocation>
</comment>
<comment type="tissue specificity">
    <text evidence="7">Expressed by the venom gland.</text>
</comment>
<comment type="domain">
    <text evidence="6">The presence of a 'disulfide through disulfide knot' structurally defines this protein as a knottin.</text>
</comment>
<comment type="mass spectrometry" mass="3061.31" method="MALDI" evidence="4">
    <text>Monoisotopic mass.</text>
</comment>
<comment type="similarity">
    <text evidence="6">Belongs to the venom Ptu1-like knottin family.</text>
</comment>
<sequence length="48" mass="5200">MRLFLIFTFIVASLASVYGCIPAANPCRGNAKCCGNYVCKNGRCLPRS</sequence>
<protein>
    <recommendedName>
        <fullName evidence="5">U-reduvitoxin-Pr5a</fullName>
        <shortName evidence="5">U-RDTX-Pr5a</shortName>
    </recommendedName>
</protein>
<proteinExistence type="evidence at protein level"/>
<organism>
    <name type="scientific">Platymeris rhadamanthus</name>
    <name type="common">Red spot assassin bug</name>
    <dbReference type="NCBI Taxonomy" id="1134088"/>
    <lineage>
        <taxon>Eukaryota</taxon>
        <taxon>Metazoa</taxon>
        <taxon>Ecdysozoa</taxon>
        <taxon>Arthropoda</taxon>
        <taxon>Hexapoda</taxon>
        <taxon>Insecta</taxon>
        <taxon>Pterygota</taxon>
        <taxon>Neoptera</taxon>
        <taxon>Paraneoptera</taxon>
        <taxon>Hemiptera</taxon>
        <taxon>Heteroptera</taxon>
        <taxon>Panheteroptera</taxon>
        <taxon>Cimicomorpha</taxon>
        <taxon>Reduviidae</taxon>
        <taxon>Platymeris</taxon>
    </lineage>
</organism>